<reference key="1">
    <citation type="journal article" date="2001" name="DNA Res.">
        <title>Complete genome sequence of an aerobic thermoacidophilic Crenarchaeon, Sulfolobus tokodaii strain7.</title>
        <authorList>
            <person name="Kawarabayasi Y."/>
            <person name="Hino Y."/>
            <person name="Horikawa H."/>
            <person name="Jin-no K."/>
            <person name="Takahashi M."/>
            <person name="Sekine M."/>
            <person name="Baba S."/>
            <person name="Ankai A."/>
            <person name="Kosugi H."/>
            <person name="Hosoyama A."/>
            <person name="Fukui S."/>
            <person name="Nagai Y."/>
            <person name="Nishijima K."/>
            <person name="Otsuka R."/>
            <person name="Nakazawa H."/>
            <person name="Takamiya M."/>
            <person name="Kato Y."/>
            <person name="Yoshizawa T."/>
            <person name="Tanaka T."/>
            <person name="Kudoh Y."/>
            <person name="Yamazaki J."/>
            <person name="Kushida N."/>
            <person name="Oguchi A."/>
            <person name="Aoki K."/>
            <person name="Masuda S."/>
            <person name="Yanagii M."/>
            <person name="Nishimura M."/>
            <person name="Yamagishi A."/>
            <person name="Oshima T."/>
            <person name="Kikuchi H."/>
        </authorList>
    </citation>
    <scope>NUCLEOTIDE SEQUENCE [LARGE SCALE GENOMIC DNA]</scope>
    <source>
        <strain>DSM 16993 / JCM 10545 / NBRC 100140 / 7</strain>
    </source>
</reference>
<proteinExistence type="inferred from homology"/>
<keyword id="KW-0030">Aminoacyl-tRNA synthetase</keyword>
<keyword id="KW-0067">ATP-binding</keyword>
<keyword id="KW-0963">Cytoplasm</keyword>
<keyword id="KW-0436">Ligase</keyword>
<keyword id="KW-0547">Nucleotide-binding</keyword>
<keyword id="KW-0648">Protein biosynthesis</keyword>
<keyword id="KW-1185">Reference proteome</keyword>
<gene>
    <name evidence="1" type="primary">gltX</name>
    <name type="ordered locus">STK_14230</name>
</gene>
<protein>
    <recommendedName>
        <fullName evidence="1">Glutamate--tRNA ligase</fullName>
        <ecNumber evidence="1">6.1.1.17</ecNumber>
    </recommendedName>
    <alternativeName>
        <fullName evidence="1">Glutamyl-tRNA synthetase</fullName>
        <shortName evidence="1">GluRS</shortName>
    </alternativeName>
</protein>
<dbReference type="EC" id="6.1.1.17" evidence="1"/>
<dbReference type="EMBL" id="BA000023">
    <property type="protein sequence ID" value="BAK54565.1"/>
    <property type="molecule type" value="Genomic_DNA"/>
</dbReference>
<dbReference type="RefSeq" id="WP_010979468.1">
    <property type="nucleotide sequence ID" value="NC_003106.2"/>
</dbReference>
<dbReference type="SMR" id="Q971D0"/>
<dbReference type="STRING" id="273063.STK_14230"/>
<dbReference type="GeneID" id="1459453"/>
<dbReference type="KEGG" id="sto:STK_14230"/>
<dbReference type="PATRIC" id="fig|273063.9.peg.1623"/>
<dbReference type="eggNOG" id="arCOG04302">
    <property type="taxonomic scope" value="Archaea"/>
</dbReference>
<dbReference type="OrthoDB" id="10470at2157"/>
<dbReference type="Proteomes" id="UP000001015">
    <property type="component" value="Chromosome"/>
</dbReference>
<dbReference type="GO" id="GO:0005829">
    <property type="term" value="C:cytosol"/>
    <property type="evidence" value="ECO:0007669"/>
    <property type="project" value="TreeGrafter"/>
</dbReference>
<dbReference type="GO" id="GO:0005524">
    <property type="term" value="F:ATP binding"/>
    <property type="evidence" value="ECO:0007669"/>
    <property type="project" value="UniProtKB-UniRule"/>
</dbReference>
<dbReference type="GO" id="GO:0004818">
    <property type="term" value="F:glutamate-tRNA ligase activity"/>
    <property type="evidence" value="ECO:0007669"/>
    <property type="project" value="UniProtKB-UniRule"/>
</dbReference>
<dbReference type="GO" id="GO:0043604">
    <property type="term" value="P:amide biosynthetic process"/>
    <property type="evidence" value="ECO:0007669"/>
    <property type="project" value="TreeGrafter"/>
</dbReference>
<dbReference type="GO" id="GO:0006424">
    <property type="term" value="P:glutamyl-tRNA aminoacylation"/>
    <property type="evidence" value="ECO:0007669"/>
    <property type="project" value="UniProtKB-UniRule"/>
</dbReference>
<dbReference type="FunFam" id="3.40.50.620:FF:000222">
    <property type="entry name" value="Glutamate--tRNA ligase"/>
    <property type="match status" value="1"/>
</dbReference>
<dbReference type="Gene3D" id="2.40.240.100">
    <property type="match status" value="1"/>
</dbReference>
<dbReference type="Gene3D" id="3.40.50.620">
    <property type="entry name" value="HUPs"/>
    <property type="match status" value="1"/>
</dbReference>
<dbReference type="Gene3D" id="2.40.240.10">
    <property type="entry name" value="Ribosomal Protein L25, Chain P"/>
    <property type="match status" value="1"/>
</dbReference>
<dbReference type="HAMAP" id="MF_02076">
    <property type="entry name" value="Glu_tRNA_synth_type2"/>
    <property type="match status" value="1"/>
</dbReference>
<dbReference type="InterPro" id="IPR050132">
    <property type="entry name" value="Gln/Glu-tRNA_Ligase"/>
</dbReference>
<dbReference type="InterPro" id="IPR004526">
    <property type="entry name" value="Glu-tRNA-synth_arc/euk"/>
</dbReference>
<dbReference type="InterPro" id="IPR000924">
    <property type="entry name" value="Glu/Gln-tRNA-synth"/>
</dbReference>
<dbReference type="InterPro" id="IPR020058">
    <property type="entry name" value="Glu/Gln-tRNA-synth_Ib_cat-dom"/>
</dbReference>
<dbReference type="InterPro" id="IPR020059">
    <property type="entry name" value="Glu/Gln-tRNA-synth_Ib_codon-bd"/>
</dbReference>
<dbReference type="InterPro" id="IPR020056">
    <property type="entry name" value="Rbsml_bL25/Gln-tRNA_synth_N"/>
</dbReference>
<dbReference type="InterPro" id="IPR011035">
    <property type="entry name" value="Ribosomal_bL25/Gln-tRNA_synth"/>
</dbReference>
<dbReference type="InterPro" id="IPR014729">
    <property type="entry name" value="Rossmann-like_a/b/a_fold"/>
</dbReference>
<dbReference type="InterPro" id="IPR049437">
    <property type="entry name" value="tRNA-synt_1c_C2"/>
</dbReference>
<dbReference type="NCBIfam" id="TIGR00463">
    <property type="entry name" value="gltX_arch"/>
    <property type="match status" value="1"/>
</dbReference>
<dbReference type="NCBIfam" id="NF003169">
    <property type="entry name" value="PRK04156.1"/>
    <property type="match status" value="1"/>
</dbReference>
<dbReference type="PANTHER" id="PTHR43097:SF5">
    <property type="entry name" value="GLUTAMATE--TRNA LIGASE"/>
    <property type="match status" value="1"/>
</dbReference>
<dbReference type="PANTHER" id="PTHR43097">
    <property type="entry name" value="GLUTAMINE-TRNA LIGASE"/>
    <property type="match status" value="1"/>
</dbReference>
<dbReference type="Pfam" id="PF00749">
    <property type="entry name" value="tRNA-synt_1c"/>
    <property type="match status" value="1"/>
</dbReference>
<dbReference type="Pfam" id="PF03950">
    <property type="entry name" value="tRNA-synt_1c_C"/>
    <property type="match status" value="1"/>
</dbReference>
<dbReference type="Pfam" id="PF20974">
    <property type="entry name" value="tRNA-synt_1c_C2"/>
    <property type="match status" value="1"/>
</dbReference>
<dbReference type="PRINTS" id="PR00987">
    <property type="entry name" value="TRNASYNTHGLU"/>
</dbReference>
<dbReference type="SUPFAM" id="SSF52374">
    <property type="entry name" value="Nucleotidylyl transferase"/>
    <property type="match status" value="1"/>
</dbReference>
<dbReference type="SUPFAM" id="SSF50715">
    <property type="entry name" value="Ribosomal protein L25-like"/>
    <property type="match status" value="1"/>
</dbReference>
<comment type="function">
    <text evidence="1">Catalyzes the attachment of glutamate to tRNA(Glu) in a two-step reaction: glutamate is first activated by ATP to form Glu-AMP and then transferred to the acceptor end of tRNA(Glu).</text>
</comment>
<comment type="catalytic activity">
    <reaction evidence="1">
        <text>tRNA(Glu) + L-glutamate + ATP = L-glutamyl-tRNA(Glu) + AMP + diphosphate</text>
        <dbReference type="Rhea" id="RHEA:23540"/>
        <dbReference type="Rhea" id="RHEA-COMP:9663"/>
        <dbReference type="Rhea" id="RHEA-COMP:9680"/>
        <dbReference type="ChEBI" id="CHEBI:29985"/>
        <dbReference type="ChEBI" id="CHEBI:30616"/>
        <dbReference type="ChEBI" id="CHEBI:33019"/>
        <dbReference type="ChEBI" id="CHEBI:78442"/>
        <dbReference type="ChEBI" id="CHEBI:78520"/>
        <dbReference type="ChEBI" id="CHEBI:456215"/>
        <dbReference type="EC" id="6.1.1.17"/>
    </reaction>
</comment>
<comment type="subcellular location">
    <subcellularLocation>
        <location evidence="1">Cytoplasm</location>
    </subcellularLocation>
</comment>
<comment type="similarity">
    <text evidence="1">Belongs to the class-I aminoacyl-tRNA synthetase family. Glutamate--tRNA ligase type 2 subfamily.</text>
</comment>
<evidence type="ECO:0000255" key="1">
    <source>
        <dbReference type="HAMAP-Rule" id="MF_02076"/>
    </source>
</evidence>
<organism>
    <name type="scientific">Sulfurisphaera tokodaii (strain DSM 16993 / JCM 10545 / NBRC 100140 / 7)</name>
    <name type="common">Sulfolobus tokodaii</name>
    <dbReference type="NCBI Taxonomy" id="273063"/>
    <lineage>
        <taxon>Archaea</taxon>
        <taxon>Thermoproteota</taxon>
        <taxon>Thermoprotei</taxon>
        <taxon>Sulfolobales</taxon>
        <taxon>Sulfolobaceae</taxon>
        <taxon>Sulfurisphaera</taxon>
    </lineage>
</organism>
<sequence length="566" mass="65517">MEEIEELIYKYALQNAYKHGGKAQDKAVVSKIFVERPDLRSRAKEISEIAKKIVEKVNSMSIQDQERELKEKYPDLLEEKKKEEPEKKTLPPIKVEGKFVTRFAPNPDGPIHLGNARAAIISYKYAEMYKGEFILRFDDTDPKVKKPIKEAYDWIRKDLKWLGIKWDKEVKASERLEFYYSMAKELISKGFAYVDTCSEEEFKKMRDASKPCPNRLKSAEDNLYLFEKMLNGEFKEGEAVVRIKTDLSLPDPSQRDWVLLRIIDVKKNPHPITGDKYWIWPTYNFASALDDHDLGITHIFRGKEHEVNAEKQKWIYNYMGWKYPYVEEFGRLRLEGFMMSKSKIRTVLEKGVSIDDPRLPTLAGLRRRGILPETIIETIITVGLKVSDATISFDNLAALNRKKLDPIAKRLMFVQQPKEFIIELSEPIRAKIPYNPSKPSEYREILVNPGDKILLDAKDAEEGAVVRLMELCNVTISGNKLIFHSKTLEDAKKLNAKIIQWVKKDEASNVEVIIPDPNEEKPPISGYGEKEIGNLKINEIVQFIRFGFVRVDNKIDNKVTVIFSHE</sequence>
<feature type="chain" id="PRO_0000119732" description="Glutamate--tRNA ligase">
    <location>
        <begin position="1"/>
        <end position="566"/>
    </location>
</feature>
<feature type="short sequence motif" description="'HIGH' region" evidence="1">
    <location>
        <begin position="105"/>
        <end position="115"/>
    </location>
</feature>
<accession>Q971D0</accession>
<accession>F9VP57</accession>
<name>SYE_SULTO</name>